<proteinExistence type="evidence at transcript level"/>
<sequence>MAAYLLAVAILFCIQGWPSGTVQGQAMPFMEVFERSVCQTREMLVSILDEHPDEVAHLFRPSCVTVLRCGGCCTDESLMCTATGKRSVGREIMRVDPRKETSKIEVMQFTEHTECECRPRSGRVNSGKRKRNPEEGGAESQVPLGLTSF</sequence>
<accession>B0VXV4</accession>
<organism>
    <name type="scientific">Sistrurus catenatus edwardsii</name>
    <name type="common">Desert massasauga</name>
    <name type="synonym">Crotalophorus edwardsii</name>
    <dbReference type="NCBI Taxonomy" id="8762"/>
    <lineage>
        <taxon>Eukaryota</taxon>
        <taxon>Metazoa</taxon>
        <taxon>Chordata</taxon>
        <taxon>Craniata</taxon>
        <taxon>Vertebrata</taxon>
        <taxon>Euteleostomi</taxon>
        <taxon>Lepidosauria</taxon>
        <taxon>Squamata</taxon>
        <taxon>Bifurcata</taxon>
        <taxon>Unidentata</taxon>
        <taxon>Episquamata</taxon>
        <taxon>Toxicofera</taxon>
        <taxon>Serpentes</taxon>
        <taxon>Colubroidea</taxon>
        <taxon>Viperidae</taxon>
        <taxon>Crotalinae</taxon>
        <taxon>Sistrurus</taxon>
    </lineage>
</organism>
<dbReference type="EMBL" id="DQ464260">
    <property type="protein sequence ID" value="ABG26989.1"/>
    <property type="molecule type" value="mRNA"/>
</dbReference>
<dbReference type="SMR" id="B0VXV4"/>
<dbReference type="GO" id="GO:0005615">
    <property type="term" value="C:extracellular space"/>
    <property type="evidence" value="ECO:0007669"/>
    <property type="project" value="TreeGrafter"/>
</dbReference>
<dbReference type="GO" id="GO:0016020">
    <property type="term" value="C:membrane"/>
    <property type="evidence" value="ECO:0007669"/>
    <property type="project" value="InterPro"/>
</dbReference>
<dbReference type="GO" id="GO:0042056">
    <property type="term" value="F:chemoattractant activity"/>
    <property type="evidence" value="ECO:0007669"/>
    <property type="project" value="TreeGrafter"/>
</dbReference>
<dbReference type="GO" id="GO:0008083">
    <property type="term" value="F:growth factor activity"/>
    <property type="evidence" value="ECO:0007669"/>
    <property type="project" value="UniProtKB-KW"/>
</dbReference>
<dbReference type="GO" id="GO:0090729">
    <property type="term" value="F:toxin activity"/>
    <property type="evidence" value="ECO:0007669"/>
    <property type="project" value="UniProtKB-KW"/>
</dbReference>
<dbReference type="GO" id="GO:0005172">
    <property type="term" value="F:vascular endothelial growth factor receptor binding"/>
    <property type="evidence" value="ECO:0007669"/>
    <property type="project" value="TreeGrafter"/>
</dbReference>
<dbReference type="GO" id="GO:0050930">
    <property type="term" value="P:induction of positive chemotaxis"/>
    <property type="evidence" value="ECO:0007669"/>
    <property type="project" value="TreeGrafter"/>
</dbReference>
<dbReference type="GO" id="GO:0045766">
    <property type="term" value="P:positive regulation of angiogenesis"/>
    <property type="evidence" value="ECO:0007669"/>
    <property type="project" value="TreeGrafter"/>
</dbReference>
<dbReference type="GO" id="GO:0001938">
    <property type="term" value="P:positive regulation of endothelial cell proliferation"/>
    <property type="evidence" value="ECO:0007669"/>
    <property type="project" value="TreeGrafter"/>
</dbReference>
<dbReference type="GO" id="GO:0060754">
    <property type="term" value="P:positive regulation of mast cell chemotaxis"/>
    <property type="evidence" value="ECO:0007669"/>
    <property type="project" value="TreeGrafter"/>
</dbReference>
<dbReference type="GO" id="GO:0001666">
    <property type="term" value="P:response to hypoxia"/>
    <property type="evidence" value="ECO:0007669"/>
    <property type="project" value="TreeGrafter"/>
</dbReference>
<dbReference type="GO" id="GO:0002040">
    <property type="term" value="P:sprouting angiogenesis"/>
    <property type="evidence" value="ECO:0007669"/>
    <property type="project" value="TreeGrafter"/>
</dbReference>
<dbReference type="GO" id="GO:0048010">
    <property type="term" value="P:vascular endothelial growth factor receptor signaling pathway"/>
    <property type="evidence" value="ECO:0007669"/>
    <property type="project" value="TreeGrafter"/>
</dbReference>
<dbReference type="GO" id="GO:0038084">
    <property type="term" value="P:vascular endothelial growth factor signaling pathway"/>
    <property type="evidence" value="ECO:0007669"/>
    <property type="project" value="TreeGrafter"/>
</dbReference>
<dbReference type="CDD" id="cd00135">
    <property type="entry name" value="PDGF"/>
    <property type="match status" value="1"/>
</dbReference>
<dbReference type="FunFam" id="2.10.90.10:FF:000030">
    <property type="entry name" value="Vascular endothelial growth factor B"/>
    <property type="match status" value="1"/>
</dbReference>
<dbReference type="Gene3D" id="2.10.90.10">
    <property type="entry name" value="Cystine-knot cytokines"/>
    <property type="match status" value="1"/>
</dbReference>
<dbReference type="InterPro" id="IPR029034">
    <property type="entry name" value="Cystine-knot_cytokine"/>
</dbReference>
<dbReference type="InterPro" id="IPR023581">
    <property type="entry name" value="PD_growth_factor_CS"/>
</dbReference>
<dbReference type="InterPro" id="IPR000072">
    <property type="entry name" value="PDGF/VEGF_dom"/>
</dbReference>
<dbReference type="InterPro" id="IPR050507">
    <property type="entry name" value="PDGF/VEGF_growth_factor"/>
</dbReference>
<dbReference type="PANTHER" id="PTHR12025">
    <property type="entry name" value="VASCULAR ENDOTHELIAL GROWTH FACTOR"/>
    <property type="match status" value="1"/>
</dbReference>
<dbReference type="PANTHER" id="PTHR12025:SF5">
    <property type="entry name" value="VASCULAR ENDOTHELIAL GROWTH FACTOR A, LONG FORM"/>
    <property type="match status" value="1"/>
</dbReference>
<dbReference type="Pfam" id="PF00341">
    <property type="entry name" value="PDGF"/>
    <property type="match status" value="1"/>
</dbReference>
<dbReference type="SMART" id="SM00141">
    <property type="entry name" value="PDGF"/>
    <property type="match status" value="1"/>
</dbReference>
<dbReference type="SUPFAM" id="SSF57501">
    <property type="entry name" value="Cystine-knot cytokines"/>
    <property type="match status" value="1"/>
</dbReference>
<dbReference type="PROSITE" id="PS00249">
    <property type="entry name" value="PDGF_1"/>
    <property type="match status" value="1"/>
</dbReference>
<dbReference type="PROSITE" id="PS50278">
    <property type="entry name" value="PDGF_2"/>
    <property type="match status" value="1"/>
</dbReference>
<comment type="function">
    <text evidence="2 4 5">Snake venom VEGFs that may contribute to venom dispersion and prey subjugation by inducing vascular permeability and hypotension. This protein induces an increase in capillary permeability after intradermal injection, as well as a drastic hypotensive effect after intravenous injection (By similarity). The hypotension is mediated by nitric oxide (NO), which is produced by VEGF-activated endothelium NO synthase. Also induces angiogenesis in vitro (By similarity). Like other crotalid VEGFs, this protein interacts with VEGF receptor-1 (FLT1) with a high affinity, whereas it binds to VEGF receptor-2 (KDR) with a low affinity (By similarity).</text>
</comment>
<comment type="subunit">
    <text evidence="2">Homodimer; disulfide-linked. Interacts with VEGF receptor-1 (FLT1) with a high affinity, whereas it binds to VEGF receptor-2 (KDR) with a low affinity. Does not bind VEGF receptor-3 (FLT4).</text>
</comment>
<comment type="subcellular location">
    <subcellularLocation>
        <location evidence="9">Secreted</location>
    </subcellularLocation>
</comment>
<comment type="tissue specificity">
    <text evidence="9">Expressed by the venom gland.</text>
</comment>
<comment type="similarity">
    <text evidence="8">Belongs to the PDGF/VEGF growth factor family. Snake venom VEGF subfamily.</text>
</comment>
<feature type="signal peptide" evidence="6">
    <location>
        <begin position="1"/>
        <end position="24"/>
    </location>
</feature>
<feature type="chain" id="PRO_0000406349" description="Snake venom vascular endothelial growth factor toxin 2">
    <location>
        <begin position="25"/>
        <end position="149"/>
    </location>
</feature>
<feature type="region of interest" description="Disordered" evidence="7">
    <location>
        <begin position="118"/>
        <end position="149"/>
    </location>
</feature>
<feature type="modified residue" description="Pyrrolidone carboxylic acid" evidence="4">
    <location>
        <position position="25"/>
    </location>
</feature>
<feature type="disulfide bond" evidence="3">
    <location>
        <begin position="38"/>
        <end position="80"/>
    </location>
</feature>
<feature type="disulfide bond" description="Interchain (with C-72)" evidence="3">
    <location>
        <position position="63"/>
    </location>
</feature>
<feature type="disulfide bond" evidence="3">
    <location>
        <begin position="69"/>
        <end position="115"/>
    </location>
</feature>
<feature type="disulfide bond" description="Interchain (with C-63)" evidence="3">
    <location>
        <position position="72"/>
    </location>
</feature>
<feature type="disulfide bond" evidence="3">
    <location>
        <begin position="73"/>
        <end position="117"/>
    </location>
</feature>
<name>TXVE_SISCA</name>
<evidence type="ECO:0000250" key="1">
    <source>
        <dbReference type="UniProtKB" id="P0DL42"/>
    </source>
</evidence>
<evidence type="ECO:0000250" key="2">
    <source>
        <dbReference type="UniProtKB" id="P67862"/>
    </source>
</evidence>
<evidence type="ECO:0000250" key="3">
    <source>
        <dbReference type="UniProtKB" id="P67863"/>
    </source>
</evidence>
<evidence type="ECO:0000250" key="4">
    <source>
        <dbReference type="UniProtKB" id="P83942"/>
    </source>
</evidence>
<evidence type="ECO:0000250" key="5">
    <source>
        <dbReference type="UniProtKB" id="Q330K6"/>
    </source>
</evidence>
<evidence type="ECO:0000255" key="6"/>
<evidence type="ECO:0000256" key="7">
    <source>
        <dbReference type="SAM" id="MobiDB-lite"/>
    </source>
</evidence>
<evidence type="ECO:0000305" key="8"/>
<evidence type="ECO:0000305" key="9">
    <source>
    </source>
</evidence>
<reference key="1">
    <citation type="journal article" date="2007" name="BMC Mol. Biol.">
        <title>The venom gland transcriptome of the Desert Massasauga rattlesnake (Sistrurus catenatus edwardsii): towards an understanding of venom composition among advanced snakes (Superfamily Colubroidea).</title>
        <authorList>
            <person name="Pahari S."/>
            <person name="Mackessy S.P."/>
            <person name="Kini R.M."/>
        </authorList>
    </citation>
    <scope>NUCLEOTIDE SEQUENCE [MRNA]</scope>
    <source>
        <tissue>Venom gland</tissue>
    </source>
</reference>
<protein>
    <recommendedName>
        <fullName>Snake venom vascular endothelial growth factor toxin 2</fullName>
        <shortName>svVEGF</shortName>
    </recommendedName>
    <alternativeName>
        <fullName evidence="1">VEGF-F</fullName>
    </alternativeName>
</protein>
<keyword id="KW-1015">Disulfide bond</keyword>
<keyword id="KW-0339">Growth factor</keyword>
<keyword id="KW-0873">Pyrrolidone carboxylic acid</keyword>
<keyword id="KW-0964">Secreted</keyword>
<keyword id="KW-0732">Signal</keyword>
<keyword id="KW-0800">Toxin</keyword>